<protein>
    <recommendedName>
        <fullName evidence="1">Large-conductance mechanosensitive channel</fullName>
    </recommendedName>
</protein>
<sequence length="136" mass="14927">MSIIKEFREFAMRGNVVDLAVGVIIGAAFGKIVSSLVADIIMPPLGLLIGGIDFKQFAVTLRDAQGDIPAVVMHYGVFIQNVFDFLIVAFAIFMAIKLINKLNRKKEEPAAAPAPTKEEVLLAEIRDLLKEQNNRS</sequence>
<proteinExistence type="inferred from homology"/>
<reference key="1">
    <citation type="submission" date="2008-05" db="EMBL/GenBank/DDBJ databases">
        <title>Complete sequence of Shigella boydii serotype 18 strain BS512.</title>
        <authorList>
            <person name="Rasko D.A."/>
            <person name="Rosovitz M."/>
            <person name="Maurelli A.T."/>
            <person name="Myers G."/>
            <person name="Seshadri R."/>
            <person name="Cer R."/>
            <person name="Jiang L."/>
            <person name="Ravel J."/>
            <person name="Sebastian Y."/>
        </authorList>
    </citation>
    <scope>NUCLEOTIDE SEQUENCE [LARGE SCALE GENOMIC DNA]</scope>
    <source>
        <strain>CDC 3083-94 / BS512</strain>
    </source>
</reference>
<name>MSCL_SHIB3</name>
<gene>
    <name evidence="1" type="primary">mscL</name>
    <name type="ordered locus">SbBS512_E3677</name>
</gene>
<dbReference type="EMBL" id="CP001063">
    <property type="protein sequence ID" value="ACD06637.1"/>
    <property type="molecule type" value="Genomic_DNA"/>
</dbReference>
<dbReference type="RefSeq" id="WP_000022439.1">
    <property type="nucleotide sequence ID" value="NC_010658.1"/>
</dbReference>
<dbReference type="SMR" id="B2U2R0"/>
<dbReference type="STRING" id="344609.SbBS512_E3677"/>
<dbReference type="GeneID" id="93778697"/>
<dbReference type="KEGG" id="sbc:SbBS512_E3677"/>
<dbReference type="HOGENOM" id="CLU_095787_0_0_6"/>
<dbReference type="Proteomes" id="UP000001030">
    <property type="component" value="Chromosome"/>
</dbReference>
<dbReference type="GO" id="GO:0005886">
    <property type="term" value="C:plasma membrane"/>
    <property type="evidence" value="ECO:0007669"/>
    <property type="project" value="UniProtKB-SubCell"/>
</dbReference>
<dbReference type="GO" id="GO:0008381">
    <property type="term" value="F:mechanosensitive monoatomic ion channel activity"/>
    <property type="evidence" value="ECO:0007669"/>
    <property type="project" value="UniProtKB-UniRule"/>
</dbReference>
<dbReference type="FunFam" id="1.10.1200.120:FF:000001">
    <property type="entry name" value="Large-conductance mechanosensitive channel"/>
    <property type="match status" value="1"/>
</dbReference>
<dbReference type="Gene3D" id="1.10.1200.120">
    <property type="entry name" value="Large-conductance mechanosensitive channel, MscL, domain 1"/>
    <property type="match status" value="1"/>
</dbReference>
<dbReference type="HAMAP" id="MF_00115">
    <property type="entry name" value="MscL"/>
    <property type="match status" value="1"/>
</dbReference>
<dbReference type="InterPro" id="IPR019823">
    <property type="entry name" value="Mechanosensitive_channel_CS"/>
</dbReference>
<dbReference type="InterPro" id="IPR001185">
    <property type="entry name" value="MS_channel"/>
</dbReference>
<dbReference type="InterPro" id="IPR037673">
    <property type="entry name" value="MSC/AndL"/>
</dbReference>
<dbReference type="InterPro" id="IPR036019">
    <property type="entry name" value="MscL_channel"/>
</dbReference>
<dbReference type="NCBIfam" id="TIGR00220">
    <property type="entry name" value="mscL"/>
    <property type="match status" value="1"/>
</dbReference>
<dbReference type="NCBIfam" id="NF001841">
    <property type="entry name" value="PRK00567.1-1"/>
    <property type="match status" value="1"/>
</dbReference>
<dbReference type="NCBIfam" id="NF001843">
    <property type="entry name" value="PRK00567.1-4"/>
    <property type="match status" value="1"/>
</dbReference>
<dbReference type="PANTHER" id="PTHR30266:SF2">
    <property type="entry name" value="LARGE-CONDUCTANCE MECHANOSENSITIVE CHANNEL"/>
    <property type="match status" value="1"/>
</dbReference>
<dbReference type="PANTHER" id="PTHR30266">
    <property type="entry name" value="MECHANOSENSITIVE CHANNEL MSCL"/>
    <property type="match status" value="1"/>
</dbReference>
<dbReference type="Pfam" id="PF01741">
    <property type="entry name" value="MscL"/>
    <property type="match status" value="1"/>
</dbReference>
<dbReference type="PRINTS" id="PR01264">
    <property type="entry name" value="MECHCHANNEL"/>
</dbReference>
<dbReference type="SUPFAM" id="SSF81330">
    <property type="entry name" value="Gated mechanosensitive channel"/>
    <property type="match status" value="1"/>
</dbReference>
<dbReference type="PROSITE" id="PS01327">
    <property type="entry name" value="MSCL"/>
    <property type="match status" value="1"/>
</dbReference>
<evidence type="ECO:0000255" key="1">
    <source>
        <dbReference type="HAMAP-Rule" id="MF_00115"/>
    </source>
</evidence>
<accession>B2U2R0</accession>
<feature type="chain" id="PRO_1000094927" description="Large-conductance mechanosensitive channel">
    <location>
        <begin position="1"/>
        <end position="136"/>
    </location>
</feature>
<feature type="transmembrane region" description="Helical" evidence="1">
    <location>
        <begin position="10"/>
        <end position="30"/>
    </location>
</feature>
<feature type="transmembrane region" description="Helical" evidence="1">
    <location>
        <begin position="76"/>
        <end position="96"/>
    </location>
</feature>
<keyword id="KW-0997">Cell inner membrane</keyword>
<keyword id="KW-1003">Cell membrane</keyword>
<keyword id="KW-0407">Ion channel</keyword>
<keyword id="KW-0406">Ion transport</keyword>
<keyword id="KW-0472">Membrane</keyword>
<keyword id="KW-1185">Reference proteome</keyword>
<keyword id="KW-0812">Transmembrane</keyword>
<keyword id="KW-1133">Transmembrane helix</keyword>
<keyword id="KW-0813">Transport</keyword>
<comment type="function">
    <text evidence="1">Channel that opens in response to stretch forces in the membrane lipid bilayer. May participate in the regulation of osmotic pressure changes within the cell.</text>
</comment>
<comment type="subunit">
    <text evidence="1">Homopentamer.</text>
</comment>
<comment type="subcellular location">
    <subcellularLocation>
        <location evidence="1">Cell inner membrane</location>
        <topology evidence="1">Multi-pass membrane protein</topology>
    </subcellularLocation>
</comment>
<comment type="similarity">
    <text evidence="1">Belongs to the MscL family.</text>
</comment>
<organism>
    <name type="scientific">Shigella boydii serotype 18 (strain CDC 3083-94 / BS512)</name>
    <dbReference type="NCBI Taxonomy" id="344609"/>
    <lineage>
        <taxon>Bacteria</taxon>
        <taxon>Pseudomonadati</taxon>
        <taxon>Pseudomonadota</taxon>
        <taxon>Gammaproteobacteria</taxon>
        <taxon>Enterobacterales</taxon>
        <taxon>Enterobacteriaceae</taxon>
        <taxon>Shigella</taxon>
    </lineage>
</organism>